<dbReference type="EC" id="4.1.3.27"/>
<dbReference type="EMBL" id="M55917">
    <property type="protein sequence ID" value="AAA26591.1"/>
    <property type="molecule type" value="Genomic_DNA"/>
</dbReference>
<dbReference type="PIR" id="A39132">
    <property type="entry name" value="A39132"/>
</dbReference>
<dbReference type="SMR" id="P21690"/>
<dbReference type="UniPathway" id="UPA00035">
    <property type="reaction ID" value="UER00040"/>
</dbReference>
<dbReference type="GO" id="GO:0004049">
    <property type="term" value="F:anthranilate synthase activity"/>
    <property type="evidence" value="ECO:0007669"/>
    <property type="project" value="UniProtKB-EC"/>
</dbReference>
<dbReference type="GO" id="GO:0046872">
    <property type="term" value="F:metal ion binding"/>
    <property type="evidence" value="ECO:0007669"/>
    <property type="project" value="UniProtKB-KW"/>
</dbReference>
<dbReference type="GO" id="GO:0000162">
    <property type="term" value="P:L-tryptophan biosynthetic process"/>
    <property type="evidence" value="ECO:0007669"/>
    <property type="project" value="UniProtKB-UniPathway"/>
</dbReference>
<dbReference type="Gene3D" id="3.60.120.10">
    <property type="entry name" value="Anthranilate synthase"/>
    <property type="match status" value="1"/>
</dbReference>
<dbReference type="InterPro" id="IPR005801">
    <property type="entry name" value="ADC_synthase"/>
</dbReference>
<dbReference type="InterPro" id="IPR019999">
    <property type="entry name" value="Anth_synth_I-like"/>
</dbReference>
<dbReference type="InterPro" id="IPR006805">
    <property type="entry name" value="Anth_synth_I_N"/>
</dbReference>
<dbReference type="InterPro" id="IPR005256">
    <property type="entry name" value="Anth_synth_I_PabB"/>
</dbReference>
<dbReference type="InterPro" id="IPR015890">
    <property type="entry name" value="Chorismate_C"/>
</dbReference>
<dbReference type="NCBIfam" id="TIGR00564">
    <property type="entry name" value="trpE_most"/>
    <property type="match status" value="1"/>
</dbReference>
<dbReference type="PANTHER" id="PTHR11236">
    <property type="entry name" value="AMINOBENZOATE/ANTHRANILATE SYNTHASE"/>
    <property type="match status" value="1"/>
</dbReference>
<dbReference type="PANTHER" id="PTHR11236:SF48">
    <property type="entry name" value="ISOCHORISMATE SYNTHASE MENF"/>
    <property type="match status" value="1"/>
</dbReference>
<dbReference type="Pfam" id="PF04715">
    <property type="entry name" value="Anth_synt_I_N"/>
    <property type="match status" value="1"/>
</dbReference>
<dbReference type="Pfam" id="PF00425">
    <property type="entry name" value="Chorismate_bind"/>
    <property type="match status" value="1"/>
</dbReference>
<dbReference type="PRINTS" id="PR00095">
    <property type="entry name" value="ANTSNTHASEI"/>
</dbReference>
<dbReference type="SUPFAM" id="SSF56322">
    <property type="entry name" value="ADC synthase"/>
    <property type="match status" value="1"/>
</dbReference>
<organism>
    <name type="scientific">Spirochaeta aurantia</name>
    <dbReference type="NCBI Taxonomy" id="147"/>
    <lineage>
        <taxon>Bacteria</taxon>
        <taxon>Pseudomonadati</taxon>
        <taxon>Spirochaetota</taxon>
        <taxon>Spirochaetia</taxon>
        <taxon>Spirochaetales</taxon>
        <taxon>Spirochaetaceae</taxon>
        <taxon>Spirochaeta</taxon>
    </lineage>
</organism>
<keyword id="KW-0028">Amino-acid biosynthesis</keyword>
<keyword id="KW-0057">Aromatic amino acid biosynthesis</keyword>
<keyword id="KW-0456">Lyase</keyword>
<keyword id="KW-0460">Magnesium</keyword>
<keyword id="KW-0479">Metal-binding</keyword>
<keyword id="KW-0822">Tryptophan biosynthesis</keyword>
<sequence length="482" mass="53699">MFLFVETIRPQQRGESLLETVIKVVPGERFTPYGLALKLGARVVLESSSSKKGRDRYSLLLLQEAFRVAQEGTEVYFVKDGRRSKVKANHRDILDVLMYFARQHSDPGQDFPFPAGGVGYLSFEFCRYCDTIHLNPAKPDPLELPDALFLFGHVFLIYDHYTDLIYLVGLNYKEASIDLEAALAAVEARVNDGDWSALGSVGAPYDAEVLPQDYDPDETYKANVGAMRQEVIAGNLLQGVPSRRLLVKTEMPAIEAYRRLRSSNPSPYMFYLDFGDYQLFRASPELHVKVKGGTAEIRPIAGTRRRGATDAEDRALEAELLADVKERAEHLMLVDLARNDLGRICQPGTVQVKDSYFIERYSHVMHIVSSVEGRLKDDKTGIDALRASFPAGTVSGAPKIRAIEVIDRLEPVQRRFYSGVVGHLSPDGSLDTCIAIRSALKKGDTMVLQAGGGIVFDSNPDRELEETYEKMRATARSLGLEI</sequence>
<protein>
    <recommendedName>
        <fullName>Anthranilate synthase component 1</fullName>
        <shortName>AS</shortName>
        <shortName>ASI</shortName>
        <ecNumber>4.1.3.27</ecNumber>
    </recommendedName>
</protein>
<gene>
    <name type="primary">trpE</name>
</gene>
<accession>P21690</accession>
<name>TRPE_SPIAU</name>
<comment type="function">
    <text evidence="1">Part of a heterotetrameric complex that catalyzes the two-step biosynthesis of anthranilate, an intermediate in the biosynthesis of L-tryptophan. In the first step, the glutamine-binding beta subunit (TrpG) of anthranilate synthase (AS) provides the glutamine amidotransferase activity which generates ammonia as a substrate that, along with chorismate, is used in the second step, catalyzed by the large alpha subunit of AS (TrpE) to produce anthranilate. In the absence of TrpG, TrpE can synthesize anthranilate directly from chorismate and high concentrations of ammonia (By similarity).</text>
</comment>
<comment type="catalytic activity">
    <reaction>
        <text>chorismate + L-glutamine = anthranilate + pyruvate + L-glutamate + H(+)</text>
        <dbReference type="Rhea" id="RHEA:21732"/>
        <dbReference type="ChEBI" id="CHEBI:15361"/>
        <dbReference type="ChEBI" id="CHEBI:15378"/>
        <dbReference type="ChEBI" id="CHEBI:16567"/>
        <dbReference type="ChEBI" id="CHEBI:29748"/>
        <dbReference type="ChEBI" id="CHEBI:29985"/>
        <dbReference type="ChEBI" id="CHEBI:58359"/>
        <dbReference type="EC" id="4.1.3.27"/>
    </reaction>
</comment>
<comment type="cofactor">
    <cofactor evidence="2">
        <name>Mg(2+)</name>
        <dbReference type="ChEBI" id="CHEBI:18420"/>
    </cofactor>
    <text evidence="2">Binds 1 Mg(2+) ion per subunit.</text>
</comment>
<comment type="activity regulation">
    <text evidence="1">Feedback inhibited by tryptophan.</text>
</comment>
<comment type="pathway">
    <text>Amino-acid biosynthesis; L-tryptophan biosynthesis; L-tryptophan from chorismate: step 1/5.</text>
</comment>
<comment type="subunit">
    <text evidence="1">Heterotetramer consisting of two non-identical subunits: a beta subunit (TrpG) and a large alpha subunit (TrpE).</text>
</comment>
<comment type="similarity">
    <text evidence="3">Belongs to the anthranilate synthase component I family.</text>
</comment>
<reference key="1">
    <citation type="journal article" date="1991" name="J. Bacteriol.">
        <title>Nucleotide sequence and analysis of a gene encoding anthranilate synthase component I in Spirochaeta aurantia.</title>
        <authorList>
            <person name="Brahamsha B."/>
            <person name="Han C.Y."/>
            <person name="Crawford I.P."/>
            <person name="Greenberg E.P."/>
        </authorList>
    </citation>
    <scope>NUCLEOTIDE SEQUENCE [GENOMIC DNA]</scope>
</reference>
<proteinExistence type="inferred from homology"/>
<evidence type="ECO:0000250" key="1"/>
<evidence type="ECO:0000250" key="2">
    <source>
        <dbReference type="UniProtKB" id="P00897"/>
    </source>
</evidence>
<evidence type="ECO:0000305" key="3"/>
<feature type="chain" id="PRO_0000154112" description="Anthranilate synthase component 1">
    <location>
        <begin position="1"/>
        <end position="482"/>
    </location>
</feature>
<feature type="binding site" evidence="2">
    <location>
        <position position="47"/>
    </location>
    <ligand>
        <name>L-tryptophan</name>
        <dbReference type="ChEBI" id="CHEBI:57912"/>
    </ligand>
</feature>
<feature type="binding site" evidence="2">
    <location>
        <begin position="267"/>
        <end position="269"/>
    </location>
    <ligand>
        <name>L-tryptophan</name>
        <dbReference type="ChEBI" id="CHEBI:57912"/>
    </ligand>
</feature>
<feature type="binding site" evidence="2">
    <location>
        <begin position="302"/>
        <end position="303"/>
    </location>
    <ligand>
        <name>chorismate</name>
        <dbReference type="ChEBI" id="CHEBI:29748"/>
    </ligand>
</feature>
<feature type="binding site" evidence="2">
    <location>
        <position position="329"/>
    </location>
    <ligand>
        <name>Mg(2+)</name>
        <dbReference type="ChEBI" id="CHEBI:18420"/>
    </ligand>
</feature>
<feature type="binding site" evidence="2">
    <location>
        <position position="417"/>
    </location>
    <ligand>
        <name>chorismate</name>
        <dbReference type="ChEBI" id="CHEBI:29748"/>
    </ligand>
</feature>
<feature type="binding site" evidence="2">
    <location>
        <position position="437"/>
    </location>
    <ligand>
        <name>chorismate</name>
        <dbReference type="ChEBI" id="CHEBI:29748"/>
    </ligand>
</feature>
<feature type="binding site" evidence="2">
    <location>
        <begin position="451"/>
        <end position="453"/>
    </location>
    <ligand>
        <name>chorismate</name>
        <dbReference type="ChEBI" id="CHEBI:29748"/>
    </ligand>
</feature>
<feature type="binding site" evidence="2">
    <location>
        <position position="453"/>
    </location>
    <ligand>
        <name>chorismate</name>
        <dbReference type="ChEBI" id="CHEBI:29748"/>
    </ligand>
</feature>
<feature type="binding site" evidence="2">
    <location>
        <position position="466"/>
    </location>
    <ligand>
        <name>Mg(2+)</name>
        <dbReference type="ChEBI" id="CHEBI:18420"/>
    </ligand>
</feature>